<feature type="peptide" id="PRO_0000011469" description="Intestinal peptide PHI-27">
    <location>
        <begin position="1"/>
        <end position="27"/>
    </location>
</feature>
<feature type="peptide" id="PRO_0000011470" description="Vasoactive intestinal peptide">
    <location>
        <begin position="45"/>
        <end position="72"/>
    </location>
</feature>
<feature type="modified residue" description="Isoleucine amide" evidence="2">
    <location>
        <position position="27"/>
    </location>
</feature>
<feature type="modified residue" description="Asparagine amide" evidence="2">
    <location>
        <position position="72"/>
    </location>
</feature>
<feature type="non-terminal residue">
    <location>
        <position position="1"/>
    </location>
</feature>
<feature type="non-terminal residue">
    <location>
        <position position="72"/>
    </location>
</feature>
<keyword id="KW-0027">Amidation</keyword>
<keyword id="KW-0165">Cleavage on pair of basic residues</keyword>
<keyword id="KW-0903">Direct protein sequencing</keyword>
<keyword id="KW-0372">Hormone</keyword>
<keyword id="KW-1185">Reference proteome</keyword>
<keyword id="KW-0964">Secreted</keyword>
<comment type="function">
    <molecule>Vasoactive intestinal peptide</molecule>
    <text evidence="1">VIP is a neuropeptide involved in a diverse array of physiological processes through activating the PACAP subfamily of class B1 G protein-coupled receptors: VIP receptor 1 (VPR1) and VIP receptor 2 (VPR2). Abundantly expressed throughout the CNS and peripheral nervous systems where they primarily exert neuroprotective and immune modulatory roles (By similarity). Also causes vasodilation, lowers arterial blood pressure, stimulates myocardial contractility, increases glycogenolysis and relaxes the smooth muscle of trachea, stomach and gall bladder (By similarity).</text>
</comment>
<comment type="function">
    <text evidence="1">PHM-27 is a bioactive form from proteolysis of the same precursor protein, that causes vasodilation. It is a potent agonist of the calcitonin receptor CALCR, with similar efficacy as calcitonin.</text>
</comment>
<comment type="subcellular location">
    <subcellularLocation>
        <location>Secreted</location>
    </subcellularLocation>
</comment>
<comment type="miscellaneous">
    <text>X's at positions 28 to 44 were included by homology with the human precursor sequence.</text>
</comment>
<comment type="similarity">
    <text evidence="3">Belongs to the glucagon family.</text>
</comment>
<accession>P32649</accession>
<name>VIP_RABIT</name>
<gene>
    <name type="primary">VIP</name>
</gene>
<organism>
    <name type="scientific">Oryctolagus cuniculus</name>
    <name type="common">Rabbit</name>
    <dbReference type="NCBI Taxonomy" id="9986"/>
    <lineage>
        <taxon>Eukaryota</taxon>
        <taxon>Metazoa</taxon>
        <taxon>Chordata</taxon>
        <taxon>Craniata</taxon>
        <taxon>Vertebrata</taxon>
        <taxon>Euteleostomi</taxon>
        <taxon>Mammalia</taxon>
        <taxon>Eutheria</taxon>
        <taxon>Euarchontoglires</taxon>
        <taxon>Glires</taxon>
        <taxon>Lagomorpha</taxon>
        <taxon>Leporidae</taxon>
        <taxon>Oryctolagus</taxon>
    </lineage>
</organism>
<dbReference type="PIR" id="B60415">
    <property type="entry name" value="VRRB"/>
</dbReference>
<dbReference type="BMRB" id="P32649"/>
<dbReference type="STRING" id="9986.ENSOCUP00000000447"/>
<dbReference type="PaxDb" id="9986-ENSOCUP00000000447"/>
<dbReference type="InParanoid" id="P32649"/>
<dbReference type="Proteomes" id="UP000001811">
    <property type="component" value="Unplaced"/>
</dbReference>
<dbReference type="GO" id="GO:0005576">
    <property type="term" value="C:extracellular region"/>
    <property type="evidence" value="ECO:0007669"/>
    <property type="project" value="UniProtKB-SubCell"/>
</dbReference>
<dbReference type="GO" id="GO:0043005">
    <property type="term" value="C:neuron projection"/>
    <property type="evidence" value="ECO:0007669"/>
    <property type="project" value="TreeGrafter"/>
</dbReference>
<dbReference type="GO" id="GO:0005184">
    <property type="term" value="F:neuropeptide hormone activity"/>
    <property type="evidence" value="ECO:0000250"/>
    <property type="project" value="UniProtKB"/>
</dbReference>
<dbReference type="GO" id="GO:0051428">
    <property type="term" value="F:peptide hormone receptor binding"/>
    <property type="evidence" value="ECO:0007669"/>
    <property type="project" value="TreeGrafter"/>
</dbReference>
<dbReference type="GO" id="GO:0031891">
    <property type="term" value="F:type 1 vasoactive intestinal polypeptide receptor binding"/>
    <property type="evidence" value="ECO:0000250"/>
    <property type="project" value="UniProtKB"/>
</dbReference>
<dbReference type="GO" id="GO:0007189">
    <property type="term" value="P:adenylate cyclase-activating G protein-coupled receptor signaling pathway"/>
    <property type="evidence" value="ECO:0000250"/>
    <property type="project" value="UniProtKB"/>
</dbReference>
<dbReference type="GO" id="GO:0048242">
    <property type="term" value="P:epinephrine secretion"/>
    <property type="evidence" value="ECO:0007669"/>
    <property type="project" value="TreeGrafter"/>
</dbReference>
<dbReference type="GO" id="GO:0048255">
    <property type="term" value="P:mRNA stabilization"/>
    <property type="evidence" value="ECO:0000250"/>
    <property type="project" value="AgBase"/>
</dbReference>
<dbReference type="GO" id="GO:0045732">
    <property type="term" value="P:positive regulation of protein catabolic process"/>
    <property type="evidence" value="ECO:0007669"/>
    <property type="project" value="UniProtKB-ARBA"/>
</dbReference>
<dbReference type="GO" id="GO:0070459">
    <property type="term" value="P:prolactin secretion"/>
    <property type="evidence" value="ECO:0000250"/>
    <property type="project" value="AgBase"/>
</dbReference>
<dbReference type="GO" id="GO:0032880">
    <property type="term" value="P:regulation of protein localization"/>
    <property type="evidence" value="ECO:0007669"/>
    <property type="project" value="TreeGrafter"/>
</dbReference>
<dbReference type="Gene3D" id="6.10.250.590">
    <property type="match status" value="1"/>
</dbReference>
<dbReference type="InterPro" id="IPR000532">
    <property type="entry name" value="Glucagon_GIP_secretin_VIP"/>
</dbReference>
<dbReference type="InterPro" id="IPR046963">
    <property type="entry name" value="VIP/GHRH-like"/>
</dbReference>
<dbReference type="PANTHER" id="PTHR11213">
    <property type="entry name" value="GLUCAGON-FAMILY NEUROPEPTIDE"/>
    <property type="match status" value="1"/>
</dbReference>
<dbReference type="PANTHER" id="PTHR11213:SF5">
    <property type="entry name" value="VIP PEPTIDES"/>
    <property type="match status" value="1"/>
</dbReference>
<dbReference type="Pfam" id="PF00123">
    <property type="entry name" value="Hormone_2"/>
    <property type="match status" value="2"/>
</dbReference>
<dbReference type="SMART" id="SM00070">
    <property type="entry name" value="GLUCA"/>
    <property type="match status" value="2"/>
</dbReference>
<dbReference type="PROSITE" id="PS00260">
    <property type="entry name" value="GLUCAGON"/>
    <property type="match status" value="2"/>
</dbReference>
<reference key="1">
    <citation type="journal article" date="1990" name="Peptides">
        <title>Amino acid sequence of VIP, PHI and secretin from the rabbit small intestine.</title>
        <authorList>
            <person name="Gossen D."/>
            <person name="Buscail L."/>
            <person name="Cauvin A."/>
            <person name="Gourlet P."/>
            <person name="de Neef P."/>
            <person name="Rathe J."/>
            <person name="Robberecht P."/>
            <person name="Vandermeers-Piret M.C."/>
            <person name="Vandermeers A."/>
            <person name="Christophe J."/>
        </authorList>
    </citation>
    <scope>PROTEIN SEQUENCE OF 1-27 AND 45-72</scope>
    <scope>AMIDATION AT ILE-27 AND ASN-72</scope>
    <source>
        <tissue>Small intestine</tissue>
    </source>
</reference>
<evidence type="ECO:0000250" key="1">
    <source>
        <dbReference type="UniProtKB" id="P01282"/>
    </source>
</evidence>
<evidence type="ECO:0000269" key="2">
    <source>
    </source>
</evidence>
<evidence type="ECO:0000305" key="3"/>
<protein>
    <recommendedName>
        <fullName>VIP peptides</fullName>
    </recommendedName>
    <component>
        <recommendedName>
            <fullName>Intestinal peptide PHI-27</fullName>
        </recommendedName>
        <alternativeName>
            <fullName>Peptide histidine isoleucinamide 27</fullName>
        </alternativeName>
    </component>
    <component>
        <recommendedName>
            <fullName>Vasoactive intestinal peptide</fullName>
            <shortName>VIP</shortName>
        </recommendedName>
        <alternativeName>
            <fullName>Vasoactive intestinal polypeptide</fullName>
        </alternativeName>
    </component>
</protein>
<sequence length="72" mass="8198">HADGVFTSDFSRLLGQLSAKKYLESLIXXXXXXXXXXXXXXXXXHSDAVFTDNYTRLRKQMAVKKYLNSILN</sequence>
<proteinExistence type="evidence at protein level"/>